<feature type="chain" id="PRO_0000452546" description="Bacterial microcompartment protein trimer-1">
    <location>
        <begin position="1"/>
        <end position="205"/>
    </location>
</feature>
<feature type="domain" description="BMC 1" evidence="1">
    <location>
        <begin position="21"/>
        <end position="106"/>
    </location>
</feature>
<feature type="domain" description="BMC 2" evidence="1">
    <location>
        <begin position="120"/>
        <end position="204"/>
    </location>
</feature>
<feature type="region of interest" description="Disordered" evidence="2">
    <location>
        <begin position="1"/>
        <end position="20"/>
    </location>
</feature>
<feature type="site" description="Gating residue" evidence="10">
    <location>
        <position position="52"/>
    </location>
</feature>
<feature type="mutagenesis site" description="Binds a 4Fe-4S cluster, exposed on the concave face." evidence="4">
    <original>S</original>
    <variation>C</variation>
    <location>
        <position position="55"/>
    </location>
</feature>
<feature type="helix" evidence="17">
    <location>
        <begin position="6"/>
        <end position="8"/>
    </location>
</feature>
<feature type="strand" evidence="17">
    <location>
        <begin position="21"/>
        <end position="28"/>
    </location>
</feature>
<feature type="helix" evidence="17">
    <location>
        <begin position="30"/>
        <end position="43"/>
    </location>
</feature>
<feature type="strand" evidence="17">
    <location>
        <begin position="47"/>
        <end position="54"/>
    </location>
</feature>
<feature type="turn" evidence="17">
    <location>
        <begin position="55"/>
        <end position="57"/>
    </location>
</feature>
<feature type="strand" evidence="17">
    <location>
        <begin position="58"/>
        <end position="65"/>
    </location>
</feature>
<feature type="helix" evidence="17">
    <location>
        <begin position="67"/>
        <end position="81"/>
    </location>
</feature>
<feature type="strand" evidence="16">
    <location>
        <begin position="83"/>
        <end position="85"/>
    </location>
</feature>
<feature type="strand" evidence="17">
    <location>
        <begin position="88"/>
        <end position="96"/>
    </location>
</feature>
<feature type="turn" evidence="17">
    <location>
        <begin position="99"/>
        <end position="101"/>
    </location>
</feature>
<feature type="helix" evidence="17">
    <location>
        <begin position="102"/>
        <end position="104"/>
    </location>
</feature>
<feature type="strand" evidence="17">
    <location>
        <begin position="105"/>
        <end position="107"/>
    </location>
</feature>
<feature type="strand" evidence="17">
    <location>
        <begin position="120"/>
        <end position="128"/>
    </location>
</feature>
<feature type="helix" evidence="17">
    <location>
        <begin position="129"/>
        <end position="142"/>
    </location>
</feature>
<feature type="strand" evidence="17">
    <location>
        <begin position="146"/>
        <end position="153"/>
    </location>
</feature>
<feature type="turn" evidence="17">
    <location>
        <begin position="154"/>
        <end position="158"/>
    </location>
</feature>
<feature type="strand" evidence="17">
    <location>
        <begin position="160"/>
        <end position="166"/>
    </location>
</feature>
<feature type="helix" evidence="17">
    <location>
        <begin position="168"/>
        <end position="182"/>
    </location>
</feature>
<feature type="helix" evidence="17">
    <location>
        <begin position="183"/>
        <end position="185"/>
    </location>
</feature>
<feature type="strand" evidence="17">
    <location>
        <begin position="186"/>
        <end position="194"/>
    </location>
</feature>
<feature type="turn" evidence="17">
    <location>
        <begin position="197"/>
        <end position="199"/>
    </location>
</feature>
<protein>
    <recommendedName>
        <fullName>Bacterial microcompartment protein trimer-1</fullName>
        <shortName evidence="8">BMC-T1</shortName>
        <shortName evidence="9">BMC-T1(S)</shortName>
    </recommendedName>
</protein>
<evidence type="ECO:0000255" key="1">
    <source>
        <dbReference type="PROSITE-ProRule" id="PRU01278"/>
    </source>
</evidence>
<evidence type="ECO:0000256" key="2">
    <source>
        <dbReference type="SAM" id="MobiDB-lite"/>
    </source>
</evidence>
<evidence type="ECO:0000269" key="3">
    <source>
    </source>
</evidence>
<evidence type="ECO:0000269" key="4">
    <source>
    </source>
</evidence>
<evidence type="ECO:0000269" key="5">
    <source>
    </source>
</evidence>
<evidence type="ECO:0000269" key="6">
    <source>
    </source>
</evidence>
<evidence type="ECO:0000269" key="7">
    <source>
    </source>
</evidence>
<evidence type="ECO:0000303" key="8">
    <source>
    </source>
</evidence>
<evidence type="ECO:0000303" key="9">
    <source>
    </source>
</evidence>
<evidence type="ECO:0000305" key="10">
    <source>
    </source>
</evidence>
<evidence type="ECO:0007744" key="11">
    <source>
        <dbReference type="PDB" id="5DIH"/>
    </source>
</evidence>
<evidence type="ECO:0007744" key="12">
    <source>
        <dbReference type="PDB" id="5DII"/>
    </source>
</evidence>
<evidence type="ECO:0007744" key="13">
    <source>
        <dbReference type="PDB" id="6N06"/>
    </source>
</evidence>
<evidence type="ECO:0007744" key="14">
    <source>
        <dbReference type="PDB" id="6N0F"/>
    </source>
</evidence>
<evidence type="ECO:0007744" key="15">
    <source>
        <dbReference type="PDB" id="6N0G"/>
    </source>
</evidence>
<evidence type="ECO:0007829" key="16">
    <source>
        <dbReference type="PDB" id="5DIH"/>
    </source>
</evidence>
<evidence type="ECO:0007829" key="17">
    <source>
        <dbReference type="PDB" id="5DII"/>
    </source>
</evidence>
<dbReference type="EMBL" id="CP001804">
    <property type="protein sequence ID" value="ACY18288.1"/>
    <property type="molecule type" value="Genomic_DNA"/>
</dbReference>
<dbReference type="RefSeq" id="WP_012830880.1">
    <property type="nucleotide sequence ID" value="NC_013440.1"/>
</dbReference>
<dbReference type="PDB" id="5DIH">
    <property type="method" value="X-ray"/>
    <property type="resolution" value="2.44 A"/>
    <property type="chains" value="A/B/C/D/E/F=1-205"/>
</dbReference>
<dbReference type="PDB" id="5DII">
    <property type="method" value="X-ray"/>
    <property type="resolution" value="1.80 A"/>
    <property type="chains" value="A/B/C/D/E/F=1-205"/>
</dbReference>
<dbReference type="PDB" id="6N06">
    <property type="method" value="EM"/>
    <property type="resolution" value="3.40 A"/>
    <property type="chains" value="A/B/C=1-205"/>
</dbReference>
<dbReference type="PDB" id="6N0F">
    <property type="method" value="EM"/>
    <property type="resolution" value="3.90 A"/>
    <property type="chains" value="G/H/I/M/N/O/S/T/U=1-205"/>
</dbReference>
<dbReference type="PDB" id="6N0G">
    <property type="method" value="EM"/>
    <property type="resolution" value="3.60 A"/>
    <property type="chains" value="A/B/C=1-205"/>
</dbReference>
<dbReference type="PDBsum" id="5DIH"/>
<dbReference type="PDBsum" id="5DII"/>
<dbReference type="PDBsum" id="6N06"/>
<dbReference type="PDBsum" id="6N0F"/>
<dbReference type="PDBsum" id="6N0G"/>
<dbReference type="EMDB" id="EMD-9311"/>
<dbReference type="EMDB" id="EMD-9314"/>
<dbReference type="EMDB" id="EMD-9315"/>
<dbReference type="SMR" id="D0LHE3"/>
<dbReference type="IntAct" id="D0LHE3">
    <property type="interactions" value="1"/>
</dbReference>
<dbReference type="STRING" id="502025.Hoch_5812"/>
<dbReference type="KEGG" id="hoh:Hoch_5812"/>
<dbReference type="eggNOG" id="COG4577">
    <property type="taxonomic scope" value="Bacteria"/>
</dbReference>
<dbReference type="HOGENOM" id="CLU_115793_0_0_7"/>
<dbReference type="OrthoDB" id="9791973at2"/>
<dbReference type="EvolutionaryTrace" id="D0LHE3"/>
<dbReference type="Proteomes" id="UP000001880">
    <property type="component" value="Chromosome"/>
</dbReference>
<dbReference type="GO" id="GO:0031469">
    <property type="term" value="C:bacterial microcompartment"/>
    <property type="evidence" value="ECO:0007669"/>
    <property type="project" value="UniProtKB-SubCell"/>
</dbReference>
<dbReference type="CDD" id="cd07054">
    <property type="entry name" value="BMC_PduT_repeat2"/>
    <property type="match status" value="1"/>
</dbReference>
<dbReference type="Gene3D" id="3.30.70.1710">
    <property type="match status" value="2"/>
</dbReference>
<dbReference type="InterPro" id="IPR000249">
    <property type="entry name" value="BMC_dom"/>
</dbReference>
<dbReference type="InterPro" id="IPR050575">
    <property type="entry name" value="BMC_shell"/>
</dbReference>
<dbReference type="InterPro" id="IPR037233">
    <property type="entry name" value="CcmK-like_sf"/>
</dbReference>
<dbReference type="InterPro" id="IPR044872">
    <property type="entry name" value="CcmK/CsoS1_BMC"/>
</dbReference>
<dbReference type="InterPro" id="IPR011238">
    <property type="entry name" value="Micro_shell_prot_PduT"/>
</dbReference>
<dbReference type="PANTHER" id="PTHR33941:SF11">
    <property type="entry name" value="BACTERIAL MICROCOMPARTMENT SHELL PROTEIN PDUJ"/>
    <property type="match status" value="1"/>
</dbReference>
<dbReference type="PANTHER" id="PTHR33941">
    <property type="entry name" value="PROPANEDIOL UTILIZATION PROTEIN PDUA"/>
    <property type="match status" value="1"/>
</dbReference>
<dbReference type="Pfam" id="PF00936">
    <property type="entry name" value="BMC"/>
    <property type="match status" value="2"/>
</dbReference>
<dbReference type="PIRSF" id="PIRSF034834">
    <property type="entry name" value="PduT"/>
    <property type="match status" value="1"/>
</dbReference>
<dbReference type="SMART" id="SM00877">
    <property type="entry name" value="BMC"/>
    <property type="match status" value="2"/>
</dbReference>
<dbReference type="SUPFAM" id="SSF143414">
    <property type="entry name" value="CcmK-like"/>
    <property type="match status" value="2"/>
</dbReference>
<dbReference type="PROSITE" id="PS51930">
    <property type="entry name" value="BMC_2"/>
    <property type="match status" value="2"/>
</dbReference>
<reference key="1">
    <citation type="journal article" date="2010" name="Stand. Genomic Sci.">
        <title>Complete genome sequence of Haliangium ochraceum type strain (SMP-2).</title>
        <authorList>
            <person name="Ivanova N."/>
            <person name="Daum C."/>
            <person name="Lang E."/>
            <person name="Abt B."/>
            <person name="Kopitz M."/>
            <person name="Saunders E."/>
            <person name="Lapidus A."/>
            <person name="Lucas S."/>
            <person name="Glavina Del Rio T."/>
            <person name="Nolan M."/>
            <person name="Tice H."/>
            <person name="Copeland A."/>
            <person name="Cheng J.F."/>
            <person name="Chen F."/>
            <person name="Bruce D."/>
            <person name="Goodwin L."/>
            <person name="Pitluck S."/>
            <person name="Mavromatis K."/>
            <person name="Pati A."/>
            <person name="Mikhailova N."/>
            <person name="Chen A."/>
            <person name="Palaniappan K."/>
            <person name="Land M."/>
            <person name="Hauser L."/>
            <person name="Chang Y.J."/>
            <person name="Jeffries C.D."/>
            <person name="Detter J.C."/>
            <person name="Brettin T."/>
            <person name="Rohde M."/>
            <person name="Goker M."/>
            <person name="Bristow J."/>
            <person name="Markowitz V."/>
            <person name="Eisen J.A."/>
            <person name="Hugenholtz P."/>
            <person name="Kyrpides N.C."/>
            <person name="Klenk H.P."/>
        </authorList>
    </citation>
    <scope>NUCLEOTIDE SEQUENCE [LARGE SCALE GENOMIC DNA]</scope>
    <source>
        <strain>DSM 14365 / CIP 107738 / JCM 11303 / AJ 13395 / SMP-2</strain>
    </source>
</reference>
<reference key="2">
    <citation type="journal article" date="2014" name="J. Mol. Biol.">
        <title>Assembly of robust bacterial microcompartment shells using building blocks from an organelle of unknown function.</title>
        <authorList>
            <person name="Lassila J.K."/>
            <person name="Bernstein S.L."/>
            <person name="Kinney J.N."/>
            <person name="Axen S.D."/>
            <person name="Kerfeld C.A."/>
        </authorList>
    </citation>
    <scope>EXPRESSION IN E.COLI</scope>
    <scope>SUBCELLULAR LOCATION</scope>
    <scope>DISRUPTION PHENOTYPE</scope>
    <scope>BIOTECHNOLOGY</scope>
</reference>
<reference key="3">
    <citation type="journal article" date="2019" name="Metab. Eng.">
        <title>A designed bacterial microcompartment shell with tunable composition and precision cargo loading.</title>
        <authorList>
            <person name="Ferlez B."/>
            <person name="Sutter M."/>
            <person name="Kerfeld C.A."/>
        </authorList>
    </citation>
    <scope>SUBCELLULAR LOCATION</scope>
    <scope>BIOTECHNOLOGY</scope>
</reference>
<reference key="4">
    <citation type="journal article" date="2017" name="Science">
        <title>Assembly principles and structure of a 6.5-MDa bacterial microcompartment shell.</title>
        <authorList>
            <person name="Sutter M."/>
            <person name="Greber B."/>
            <person name="Aussignargues C."/>
            <person name="Kerfeld C.A."/>
        </authorList>
    </citation>
    <scope>STRUCTURE BY ELECTRON MICROSCOPY OF BMC</scope>
    <scope>FUNCTION</scope>
    <scope>SUBUNIT</scope>
    <scope>SUBCELLULAR LOCATION</scope>
    <scope>DOMAIN</scope>
    <source>
        <strain>DSM 14365 / CIP 107738 / JCM 11303 / AJ 13395 / SMP-2</strain>
    </source>
</reference>
<reference evidence="11 12" key="5">
    <citation type="journal article" date="2016" name="J. Am. Chem. Soc.">
        <title>Structure and Function of a Bacterial Microcompartment Shell Protein Engineered to Bind a [4Fe-4S] Cluster.</title>
        <authorList>
            <person name="Aussignargues C."/>
            <person name="Pandelia M.E."/>
            <person name="Sutter M."/>
            <person name="Plegaria J.S."/>
            <person name="Zarzycki J."/>
            <person name="Turmo A."/>
            <person name="Huang J."/>
            <person name="Ducat D.C."/>
            <person name="Hegg E.L."/>
            <person name="Gibney B.R."/>
            <person name="Kerfeld C.A."/>
        </authorList>
    </citation>
    <scope>X-RAY CRYSTALLOGRAPHY (1.80 ANGSTROMS)</scope>
    <scope>SUBUNIT</scope>
    <scope>BIOTECHNOLOGY</scope>
    <scope>MUTAGENESIS OF SER-55</scope>
    <source>
        <strain>DSM 14365 / CIP 107738 / JCM 11303 / AJ 13395 / SMP-2</strain>
    </source>
</reference>
<reference evidence="13 14 15" key="6">
    <citation type="journal article" date="2019" name="Structure">
        <title>The Plasticity of Molecular Interactions Governs Bacterial Microcompartment Shell Assembly.</title>
        <authorList>
            <person name="Greber B.J."/>
            <person name="Sutter M."/>
            <person name="Kerfeld C.A."/>
        </authorList>
    </citation>
    <scope>STRUCTURE BY ELECTRON MICROSCOPY (3.40 ANGSTROMS) OF BMC</scope>
    <scope>FUNCTION</scope>
    <scope>SUBUNIT</scope>
    <scope>SUBCELLULAR LOCATION</scope>
</reference>
<sequence>MDHAPERFDATPPAGEPDRPALGVLELTSIARGITVADAALKRAPSLLLMSRPVSSGKHLLMMRGQVAEVEESMIAAREIAGAGSGALLDELELPYAHEQLWRFLDAPVVADAWEEDTESVIIVETATVCAAIDSADAALKTAPVVLRDMRLAIGIAGKAFFTLTGELADVEAAAEVVRERCGARLLELACIARPVDELRGRLFF</sequence>
<keyword id="KW-0002">3D-structure</keyword>
<keyword id="KW-1283">Bacterial microcompartment</keyword>
<keyword id="KW-1185">Reference proteome</keyword>
<accession>D0LHE3</accession>
<name>BMCT1_HALO1</name>
<gene>
    <name type="ordered locus">Hoch_5812</name>
</gene>
<proteinExistence type="evidence at protein level"/>
<organism>
    <name type="scientific">Haliangium ochraceum (strain DSM 14365 / JCM 11303 / SMP-2)</name>
    <dbReference type="NCBI Taxonomy" id="502025"/>
    <lineage>
        <taxon>Bacteria</taxon>
        <taxon>Pseudomonadati</taxon>
        <taxon>Myxococcota</taxon>
        <taxon>Polyangia</taxon>
        <taxon>Haliangiales</taxon>
        <taxon>Kofleriaceae</taxon>
        <taxon>Haliangium</taxon>
    </lineage>
</organism>
<comment type="function">
    <text evidence="5 6">A minor component of the bacterial microcompartment (BMC) shell. Expression of 5 proteins in E.coli (BMC-H (Hoch_5815), BMC-P (Hoch_5814), and 3 BMC-T (Hoch_5812, Hoch_5816, Hoch_3341)) forms 40 nm artificial BMCs with a molecular mass of 6.5 MDa. This protein does not form stacked pseudohexamers in the BMC. There are 20 BMC-T pseudohexamers per BMC, composed of mixed BMC-T1, BMC-T2 and BMC-T3. The shell facets are 20-30 Angstroms thick, with 1 of BMC-T trimers protruding to the exterior.</text>
</comment>
<comment type="subunit">
    <text evidence="4 5 6">Homotrimerizes to form a pseudohexamer (PubMed:26704697, PubMed:28642439, PubMed:30833088). Unlike its paralogs BMC-T2 and BMC-T3, the pseudohexamers do not stack. The concave side faces outward, with the N- and C-terminii exposed to the cytoplasm (PubMed:28642439, PubMed:30833088).</text>
</comment>
<comment type="subcellular location">
    <subcellularLocation>
        <location evidence="3 5 6 7">Bacterial microcompartment</location>
    </subcellularLocation>
</comment>
<comment type="domain">
    <text evidence="5">These proteins have 2 BMC domains which evolve independently of each other, giving the term pseudohexamer to the trimerized subunit. Although the homotrimer fills the approximate space of a BMC hexamer protein, the BMC-T trimers are more compact. Their universal presence in BMCs indicates their structural importance. The homohexamers form pores of at least 5 Angstroms in diameter.</text>
</comment>
<comment type="disruption phenotype">
    <text evidence="3">Required for efficient BMC formation; when deleted from an artificial operon (Hoch_5815, Hoch_5812, Hoch_3341, Hoch_5816, Hoch_4425, Hoch_4426, Hoch_5814) being expressed in E.coli, a &gt;10-fold decrease in BMC shells is seen.</text>
</comment>
<comment type="biotechnology">
    <text evidence="3 4 5 7">Artificial BMCs can be made in E.coli by expressing (Hoch_5815, Hoch_5812, Hoch_3341, Hoch_5816, Hoch_4425, Hoch_4426, Hoch_5814) or (BMC-H (Hoch_5815), BMC-P (Hoch_5814), and 3 BMC-T (Hoch_5812, Hoch_5816, Hoch_3341)). Cargo proteins can be targeted to this BMC (PubMed:24631000, PubMed:28642439). BMC-H can be modified to place its N- and C-terminii in the interior of the shell (called CPH). Fusing proteins to the C-terminus of CPH allows targeting of cargo proteins to the lumen of the organelle composed of CPH, BMC-P and BMC-T1 (PubMed:31075444). This subunit has been modifed to bind a 4Fe-4S center, which is the first step in conferring electron-transfer function to BMCs (PubMed:26704697).</text>
</comment>
<comment type="similarity">
    <text evidence="1">Belongs to the bacterial microcompartments protein family.</text>
</comment>